<protein>
    <recommendedName>
        <fullName>Putative outer membrane protein CT_371</fullName>
    </recommendedName>
</protein>
<evidence type="ECO:0000255" key="1"/>
<evidence type="ECO:0000305" key="2"/>
<gene>
    <name type="ordered locus">CT_371</name>
</gene>
<comment type="subcellular location">
    <subcellularLocation>
        <location evidence="2">Cell outer membrane</location>
        <topology evidence="2">Peripheral membrane protein</topology>
    </subcellularLocation>
</comment>
<proteinExistence type="inferred from homology"/>
<name>OMPY_CHLTR</name>
<keyword id="KW-0998">Cell outer membrane</keyword>
<keyword id="KW-0472">Membrane</keyword>
<keyword id="KW-1185">Reference proteome</keyword>
<keyword id="KW-0732">Signal</keyword>
<dbReference type="EMBL" id="AE001273">
    <property type="protein sequence ID" value="AAC67967.1"/>
    <property type="molecule type" value="Genomic_DNA"/>
</dbReference>
<dbReference type="PIR" id="D71523">
    <property type="entry name" value="D71523"/>
</dbReference>
<dbReference type="RefSeq" id="NP_219880.1">
    <property type="nucleotide sequence ID" value="NC_000117.1"/>
</dbReference>
<dbReference type="RefSeq" id="WP_009871724.1">
    <property type="nucleotide sequence ID" value="NC_000117.1"/>
</dbReference>
<dbReference type="STRING" id="272561.CT_371"/>
<dbReference type="EnsemblBacteria" id="AAC67967">
    <property type="protein sequence ID" value="AAC67967"/>
    <property type="gene ID" value="CT_371"/>
</dbReference>
<dbReference type="GeneID" id="884746"/>
<dbReference type="KEGG" id="ctr:CT_371"/>
<dbReference type="PATRIC" id="fig|272561.5.peg.400"/>
<dbReference type="HOGENOM" id="CLU_1064338_0_0_0"/>
<dbReference type="InParanoid" id="O84376"/>
<dbReference type="OrthoDB" id="18892at2"/>
<dbReference type="Proteomes" id="UP000000431">
    <property type="component" value="Chromosome"/>
</dbReference>
<dbReference type="GO" id="GO:0009279">
    <property type="term" value="C:cell outer membrane"/>
    <property type="evidence" value="ECO:0007669"/>
    <property type="project" value="UniProtKB-SubCell"/>
</dbReference>
<dbReference type="InterPro" id="IPR022565">
    <property type="entry name" value="DUF2608"/>
</dbReference>
<dbReference type="Pfam" id="PF11019">
    <property type="entry name" value="DUF2608"/>
    <property type="match status" value="1"/>
</dbReference>
<feature type="signal peptide" evidence="1">
    <location>
        <begin position="1"/>
        <end position="18"/>
    </location>
</feature>
<feature type="chain" id="PRO_0000020162" description="Putative outer membrane protein CT_371">
    <location>
        <begin position="19"/>
        <end position="261"/>
    </location>
</feature>
<reference key="1">
    <citation type="journal article" date="1998" name="Science">
        <title>Genome sequence of an obligate intracellular pathogen of humans: Chlamydia trachomatis.</title>
        <authorList>
            <person name="Stephens R.S."/>
            <person name="Kalman S."/>
            <person name="Lammel C.J."/>
            <person name="Fan J."/>
            <person name="Marathe R."/>
            <person name="Aravind L."/>
            <person name="Mitchell W.P."/>
            <person name="Olinger L."/>
            <person name="Tatusov R.L."/>
            <person name="Zhao Q."/>
            <person name="Koonin E.V."/>
            <person name="Davis R.W."/>
        </authorList>
    </citation>
    <scope>NUCLEOTIDE SEQUENCE [LARGE SCALE GENOMIC DNA]</scope>
    <source>
        <strain>ATCC VR-885 / DSM 19411 / UW-3/Cx</strain>
    </source>
</reference>
<accession>O84376</accession>
<organism>
    <name type="scientific">Chlamydia trachomatis serovar D (strain ATCC VR-885 / DSM 19411 / UW-3/Cx)</name>
    <dbReference type="NCBI Taxonomy" id="272561"/>
    <lineage>
        <taxon>Bacteria</taxon>
        <taxon>Pseudomonadati</taxon>
        <taxon>Chlamydiota</taxon>
        <taxon>Chlamydiia</taxon>
        <taxon>Chlamydiales</taxon>
        <taxon>Chlamydiaceae</taxon>
        <taxon>Chlamydia/Chlamydophila group</taxon>
        <taxon>Chlamydia</taxon>
    </lineage>
</organism>
<sequence length="261" mass="29880">MRLCFILFLLLSPLISEASQHIITVKTIHEIASDILYDDANYWLIFDIDDVLFEGAEALSHSAWFERSIQGMRALGTSEQEAWDTLYPDWLSIQRQGSIKQIETAIPLLITKVQNQNKIVFAYSERKVCAQDVTLEQLAKINLSFEKANLPYTSLPSNICFTKGVLFGSEIHKGPGLQRFLDAQPSLPEKVIYIDNEKYNVLRIGEVCKQKNIPYLGIVYTASKYHPPIYLPDIARIQYLYRQKLISNEAAALLSRHRLDK</sequence>